<dbReference type="EC" id="2.3.1.275" evidence="1"/>
<dbReference type="EMBL" id="AL646052">
    <property type="protein sequence ID" value="CAD16253.1"/>
    <property type="molecule type" value="Genomic_DNA"/>
</dbReference>
<dbReference type="RefSeq" id="WP_011002461.1">
    <property type="nucleotide sequence ID" value="NC_003295.1"/>
</dbReference>
<dbReference type="SMR" id="Q8XWC8"/>
<dbReference type="STRING" id="267608.RSc2546"/>
<dbReference type="EnsemblBacteria" id="CAD16253">
    <property type="protein sequence ID" value="CAD16253"/>
    <property type="gene ID" value="RSc2546"/>
</dbReference>
<dbReference type="KEGG" id="rso:RSc2546"/>
<dbReference type="eggNOG" id="COG0344">
    <property type="taxonomic scope" value="Bacteria"/>
</dbReference>
<dbReference type="HOGENOM" id="CLU_081254_0_0_4"/>
<dbReference type="UniPathway" id="UPA00085"/>
<dbReference type="Proteomes" id="UP000001436">
    <property type="component" value="Chromosome"/>
</dbReference>
<dbReference type="GO" id="GO:0005886">
    <property type="term" value="C:plasma membrane"/>
    <property type="evidence" value="ECO:0007669"/>
    <property type="project" value="UniProtKB-SubCell"/>
</dbReference>
<dbReference type="GO" id="GO:0043772">
    <property type="term" value="F:acyl-phosphate glycerol-3-phosphate acyltransferase activity"/>
    <property type="evidence" value="ECO:0007669"/>
    <property type="project" value="UniProtKB-UniRule"/>
</dbReference>
<dbReference type="GO" id="GO:0008654">
    <property type="term" value="P:phospholipid biosynthetic process"/>
    <property type="evidence" value="ECO:0007669"/>
    <property type="project" value="UniProtKB-UniRule"/>
</dbReference>
<dbReference type="HAMAP" id="MF_01043">
    <property type="entry name" value="PlsY"/>
    <property type="match status" value="1"/>
</dbReference>
<dbReference type="InterPro" id="IPR003811">
    <property type="entry name" value="G3P_acylTferase_PlsY"/>
</dbReference>
<dbReference type="NCBIfam" id="TIGR00023">
    <property type="entry name" value="glycerol-3-phosphate 1-O-acyltransferase PlsY"/>
    <property type="match status" value="1"/>
</dbReference>
<dbReference type="PANTHER" id="PTHR30309:SF0">
    <property type="entry name" value="GLYCEROL-3-PHOSPHATE ACYLTRANSFERASE-RELATED"/>
    <property type="match status" value="1"/>
</dbReference>
<dbReference type="PANTHER" id="PTHR30309">
    <property type="entry name" value="INNER MEMBRANE PROTEIN YGIH"/>
    <property type="match status" value="1"/>
</dbReference>
<dbReference type="Pfam" id="PF02660">
    <property type="entry name" value="G3P_acyltransf"/>
    <property type="match status" value="1"/>
</dbReference>
<dbReference type="SMART" id="SM01207">
    <property type="entry name" value="G3P_acyltransf"/>
    <property type="match status" value="1"/>
</dbReference>
<keyword id="KW-0997">Cell inner membrane</keyword>
<keyword id="KW-1003">Cell membrane</keyword>
<keyword id="KW-0444">Lipid biosynthesis</keyword>
<keyword id="KW-0443">Lipid metabolism</keyword>
<keyword id="KW-0472">Membrane</keyword>
<keyword id="KW-0594">Phospholipid biosynthesis</keyword>
<keyword id="KW-1208">Phospholipid metabolism</keyword>
<keyword id="KW-1185">Reference proteome</keyword>
<keyword id="KW-0808">Transferase</keyword>
<keyword id="KW-0812">Transmembrane</keyword>
<keyword id="KW-1133">Transmembrane helix</keyword>
<name>PLSY_RALN1</name>
<organism>
    <name type="scientific">Ralstonia nicotianae (strain ATCC BAA-1114 / GMI1000)</name>
    <name type="common">Ralstonia solanacearum</name>
    <dbReference type="NCBI Taxonomy" id="267608"/>
    <lineage>
        <taxon>Bacteria</taxon>
        <taxon>Pseudomonadati</taxon>
        <taxon>Pseudomonadota</taxon>
        <taxon>Betaproteobacteria</taxon>
        <taxon>Burkholderiales</taxon>
        <taxon>Burkholderiaceae</taxon>
        <taxon>Ralstonia</taxon>
        <taxon>Ralstonia solanacearum species complex</taxon>
    </lineage>
</organism>
<protein>
    <recommendedName>
        <fullName evidence="1">Glycerol-3-phosphate acyltransferase</fullName>
    </recommendedName>
    <alternativeName>
        <fullName evidence="1">Acyl-PO4 G3P acyltransferase</fullName>
    </alternativeName>
    <alternativeName>
        <fullName evidence="1">Acyl-phosphate--glycerol-3-phosphate acyltransferase</fullName>
    </alternativeName>
    <alternativeName>
        <fullName evidence="1">G3P acyltransferase</fullName>
        <shortName evidence="1">GPAT</shortName>
        <ecNumber evidence="1">2.3.1.275</ecNumber>
    </alternativeName>
    <alternativeName>
        <fullName evidence="1">Lysophosphatidic acid synthase</fullName>
        <shortName evidence="1">LPA synthase</shortName>
    </alternativeName>
</protein>
<feature type="chain" id="PRO_0000188435" description="Glycerol-3-phosphate acyltransferase">
    <location>
        <begin position="1"/>
        <end position="207"/>
    </location>
</feature>
<feature type="transmembrane region" description="Helical" evidence="1">
    <location>
        <begin position="4"/>
        <end position="24"/>
    </location>
</feature>
<feature type="transmembrane region" description="Helical" evidence="1">
    <location>
        <begin position="58"/>
        <end position="78"/>
    </location>
</feature>
<feature type="transmembrane region" description="Helical" evidence="1">
    <location>
        <begin position="86"/>
        <end position="106"/>
    </location>
</feature>
<feature type="transmembrane region" description="Helical" evidence="1">
    <location>
        <begin position="120"/>
        <end position="140"/>
    </location>
</feature>
<feature type="transmembrane region" description="Helical" evidence="1">
    <location>
        <begin position="162"/>
        <end position="182"/>
    </location>
</feature>
<proteinExistence type="inferred from homology"/>
<gene>
    <name evidence="1" type="primary">plsY</name>
    <name type="ordered locus">RSc2546</name>
    <name type="ORF">RS00725</name>
</gene>
<accession>Q8XWC8</accession>
<sequence length="207" mass="21620">MSTVVATVVFAVAAYLIGSVSFAVVVSRAMGLADPRTYGSGNPGATNVLRSGNKKAAILTLLGDAAKGWLAVWLAQLLAPRYGVEDMGIALVVIAAFLGHLYPVFHRFTGGKGVATAAGILLALSGWLGLATLATWLIIATFFRYSSLAALVSAVFAPFYYVLLFGIDPLAGAIAVMSVLLIARHRANIAKLLAGKESRIGEKKKPT</sequence>
<evidence type="ECO:0000255" key="1">
    <source>
        <dbReference type="HAMAP-Rule" id="MF_01043"/>
    </source>
</evidence>
<comment type="function">
    <text evidence="1">Catalyzes the transfer of an acyl group from acyl-phosphate (acyl-PO(4)) to glycerol-3-phosphate (G3P) to form lysophosphatidic acid (LPA). This enzyme utilizes acyl-phosphate as fatty acyl donor, but not acyl-CoA or acyl-ACP.</text>
</comment>
<comment type="catalytic activity">
    <reaction evidence="1">
        <text>an acyl phosphate + sn-glycerol 3-phosphate = a 1-acyl-sn-glycero-3-phosphate + phosphate</text>
        <dbReference type="Rhea" id="RHEA:34075"/>
        <dbReference type="ChEBI" id="CHEBI:43474"/>
        <dbReference type="ChEBI" id="CHEBI:57597"/>
        <dbReference type="ChEBI" id="CHEBI:57970"/>
        <dbReference type="ChEBI" id="CHEBI:59918"/>
        <dbReference type="EC" id="2.3.1.275"/>
    </reaction>
</comment>
<comment type="pathway">
    <text evidence="1">Lipid metabolism; phospholipid metabolism.</text>
</comment>
<comment type="subunit">
    <text evidence="1">Probably interacts with PlsX.</text>
</comment>
<comment type="subcellular location">
    <subcellularLocation>
        <location evidence="1">Cell inner membrane</location>
        <topology evidence="1">Multi-pass membrane protein</topology>
    </subcellularLocation>
</comment>
<comment type="similarity">
    <text evidence="1">Belongs to the PlsY family.</text>
</comment>
<reference key="1">
    <citation type="journal article" date="2002" name="Nature">
        <title>Genome sequence of the plant pathogen Ralstonia solanacearum.</title>
        <authorList>
            <person name="Salanoubat M."/>
            <person name="Genin S."/>
            <person name="Artiguenave F."/>
            <person name="Gouzy J."/>
            <person name="Mangenot S."/>
            <person name="Arlat M."/>
            <person name="Billault A."/>
            <person name="Brottier P."/>
            <person name="Camus J.-C."/>
            <person name="Cattolico L."/>
            <person name="Chandler M."/>
            <person name="Choisne N."/>
            <person name="Claudel-Renard C."/>
            <person name="Cunnac S."/>
            <person name="Demange N."/>
            <person name="Gaspin C."/>
            <person name="Lavie M."/>
            <person name="Moisan A."/>
            <person name="Robert C."/>
            <person name="Saurin W."/>
            <person name="Schiex T."/>
            <person name="Siguier P."/>
            <person name="Thebault P."/>
            <person name="Whalen M."/>
            <person name="Wincker P."/>
            <person name="Levy M."/>
            <person name="Weissenbach J."/>
            <person name="Boucher C.A."/>
        </authorList>
    </citation>
    <scope>NUCLEOTIDE SEQUENCE [LARGE SCALE GENOMIC DNA]</scope>
    <source>
        <strain>ATCC BAA-1114 / GMI1000</strain>
    </source>
</reference>